<comment type="function">
    <text evidence="1">Involved in the anaerobic metabolism of phenylalanine and phenylacetate. Catalyzes the oxidative decarboxylation of phenylglyoxylate to benzoyl-CoA and CO(2). It can also react slowly with 2-oxo-3-methylbutanoate and use different electron acceptors such as benzyl viologen, methyl viologen, FAD or FMN, but NAD seems to be the physiological electron acceptor. Also catalyzes an isotope exchange between CO(2) and the carboxyl group which proves partial or complete reversibility of the oxidative decarboxylation reaction.</text>
</comment>
<comment type="catalytic activity">
    <reaction evidence="1">
        <text>phenylglyoxylate + NAD(+) + CoA = benzoyl-CoA + CO2 + NADH</text>
        <dbReference type="Rhea" id="RHEA:10372"/>
        <dbReference type="ChEBI" id="CHEBI:16526"/>
        <dbReference type="ChEBI" id="CHEBI:36656"/>
        <dbReference type="ChEBI" id="CHEBI:57287"/>
        <dbReference type="ChEBI" id="CHEBI:57369"/>
        <dbReference type="ChEBI" id="CHEBI:57540"/>
        <dbReference type="ChEBI" id="CHEBI:57945"/>
        <dbReference type="EC" id="1.2.1.58"/>
    </reaction>
</comment>
<comment type="activity regulation">
    <text evidence="1">Activated by magnesium ions and thiamine diphosphate.</text>
</comment>
<comment type="biophysicochemical properties">
    <kinetics>
        <KM evidence="1">45 uM for phenylglyoxylate (under anaerobic conditions at 37 degrees Celsius and pH 7.8)</KM>
        <KM evidence="1">55 uM for coenzyme-A (under anaerobic conditions at 37 degrees Celsius and pH 7.8)</KM>
        <KM evidence="1">74 uM for NAD (under anaerobic conditions at 37 degrees Celsius and pH 7.8)</KM>
    </kinetics>
    <phDependence>
        <text evidence="1">Optimum pH is 8 when measured with benzyl viologen. Half-maximal activities are obtained at pH 9 and pH 6.8.</text>
    </phDependence>
</comment>
<comment type="subunit">
    <text evidence="1">Dimer of heteropentamers composed of an alpha (PadG), a beta (PadI), a gamma (PadE), a delta (PadF) and an epsilon (PadH) subunit.</text>
</comment>
<comment type="induction">
    <text evidence="1">Induced anaerobically by phenylalanine, phenylacetate or phenylglyoxylate.</text>
</comment>
<gene>
    <name type="primary">padE</name>
</gene>
<feature type="chain" id="PRO_0000418536" description="NADH-dependent phenylglyoxylate dehydrogenase subunit gamma">
    <location>
        <begin position="1"/>
        <end position="190"/>
    </location>
</feature>
<protein>
    <recommendedName>
        <fullName>NADH-dependent phenylglyoxylate dehydrogenase subunit gamma</fullName>
        <ecNumber>1.2.1.58</ecNumber>
    </recommendedName>
    <alternativeName>
        <fullName>Phenylglyoxylate:NAD oxidoreductase</fullName>
    </alternativeName>
    <alternativeName>
        <fullName>Phenylglyoxylate:acceptor oxidoreductase</fullName>
    </alternativeName>
</protein>
<proteinExistence type="evidence at protein level"/>
<accession>Q8L3B3</accession>
<sequence length="190" mass="20528">MYEVRFHGRGGQGSVMASGMLAAAMVEEGKYAVSIPSFGFERRGAPVVSFLRMSDREIRQLTNIYQPDCIVCVDPTLTKSVDIFAGMKAGGTLVQATHHPLSELALPDCVSTVGLLDAVKIALEIFKRPITNTLMLGAFAKTTGVVSLESLKRALEDSEFRDAGLAQNMTALERGYAEVAVHHIERRAAA</sequence>
<dbReference type="EC" id="1.2.1.58"/>
<dbReference type="EMBL" id="AJ428571">
    <property type="protein sequence ID" value="CAD21689.1"/>
    <property type="molecule type" value="Genomic_DNA"/>
</dbReference>
<dbReference type="RefSeq" id="WP_169131978.1">
    <property type="nucleotide sequence ID" value="NZ_CAWPLS010000280.1"/>
</dbReference>
<dbReference type="SMR" id="Q8L3B3"/>
<dbReference type="KEGG" id="ag:CAD21689"/>
<dbReference type="BioCyc" id="MetaCyc:MONOMER-124221"/>
<dbReference type="GO" id="GO:0051287">
    <property type="term" value="F:NAD binding"/>
    <property type="evidence" value="ECO:0000314"/>
    <property type="project" value="UniProtKB"/>
</dbReference>
<dbReference type="GO" id="GO:0016625">
    <property type="term" value="F:oxidoreductase activity, acting on the aldehyde or oxo group of donors, iron-sulfur protein as acceptor"/>
    <property type="evidence" value="ECO:0007669"/>
    <property type="project" value="InterPro"/>
</dbReference>
<dbReference type="GO" id="GO:0047110">
    <property type="term" value="F:phenylglyoxylate dehydrogenase (acylating) activity"/>
    <property type="evidence" value="ECO:0000314"/>
    <property type="project" value="UniProtKB"/>
</dbReference>
<dbReference type="GO" id="GO:0006558">
    <property type="term" value="P:L-phenylalanine metabolic process"/>
    <property type="evidence" value="ECO:0000314"/>
    <property type="project" value="UniProtKB"/>
</dbReference>
<dbReference type="Gene3D" id="3.40.920.10">
    <property type="entry name" value="Pyruvate-ferredoxin oxidoreductase, PFOR, domain III"/>
    <property type="match status" value="1"/>
</dbReference>
<dbReference type="InterPro" id="IPR051626">
    <property type="entry name" value="Oxidoreductase_gamma_subunit"/>
</dbReference>
<dbReference type="InterPro" id="IPR054811">
    <property type="entry name" value="PadE"/>
</dbReference>
<dbReference type="InterPro" id="IPR011894">
    <property type="entry name" value="PorC_KorC"/>
</dbReference>
<dbReference type="InterPro" id="IPR019752">
    <property type="entry name" value="Pyrv/ketoisovalerate_OxRed_cat"/>
</dbReference>
<dbReference type="InterPro" id="IPR002869">
    <property type="entry name" value="Pyrv_flavodox_OxRed_cen"/>
</dbReference>
<dbReference type="NCBIfam" id="NF045762">
    <property type="entry name" value="PhenlGlyoxDHPadE"/>
    <property type="match status" value="1"/>
</dbReference>
<dbReference type="NCBIfam" id="TIGR02175">
    <property type="entry name" value="PorC_KorC"/>
    <property type="match status" value="1"/>
</dbReference>
<dbReference type="PANTHER" id="PTHR43366">
    <property type="entry name" value="PYRUVATE SYNTHASE SUBUNIT PORC"/>
    <property type="match status" value="1"/>
</dbReference>
<dbReference type="PANTHER" id="PTHR43366:SF1">
    <property type="entry name" value="PYRUVATE SYNTHASE SUBUNIT PORC"/>
    <property type="match status" value="1"/>
</dbReference>
<dbReference type="Pfam" id="PF01558">
    <property type="entry name" value="POR"/>
    <property type="match status" value="1"/>
</dbReference>
<dbReference type="SUPFAM" id="SSF53323">
    <property type="entry name" value="Pyruvate-ferredoxin oxidoreductase, PFOR, domain III"/>
    <property type="match status" value="1"/>
</dbReference>
<keyword id="KW-0903">Direct protein sequencing</keyword>
<keyword id="KW-0520">NAD</keyword>
<keyword id="KW-0560">Oxidoreductase</keyword>
<name>PADE_AROEV</name>
<evidence type="ECO:0000269" key="1">
    <source>
    </source>
</evidence>
<organism>
    <name type="scientific">Aromatoleum evansii</name>
    <name type="common">Azoarcus evansii</name>
    <dbReference type="NCBI Taxonomy" id="59406"/>
    <lineage>
        <taxon>Bacteria</taxon>
        <taxon>Pseudomonadati</taxon>
        <taxon>Pseudomonadota</taxon>
        <taxon>Betaproteobacteria</taxon>
        <taxon>Rhodocyclales</taxon>
        <taxon>Rhodocyclaceae</taxon>
        <taxon>Aromatoleum</taxon>
    </lineage>
</organism>
<reference key="1">
    <citation type="submission" date="2002-01" db="EMBL/GenBank/DDBJ databases">
        <title>Characterization of genes involved in anaerobic phenylacetate degradation in Azoarcus evansii.</title>
        <authorList>
            <person name="Haas S."/>
            <person name="Hammer E."/>
            <person name="Herrmann H."/>
            <person name="Burchhardt G."/>
        </authorList>
    </citation>
    <scope>NUCLEOTIDE SEQUENCE [GENOMIC DNA]</scope>
    <source>
        <strain>DSM 6898 / NBRC 107771 / KB740</strain>
    </source>
</reference>
<reference key="2">
    <citation type="journal article" date="1998" name="Eur. J. Biochem.">
        <title>Phenylglyoxylate:NAD+ oxidoreductase (CoA benzoylating), a new enzyme of anaerobic phenylalanine metabolism in the denitrifying bacterium Azoarcus evansii.</title>
        <authorList>
            <person name="Hirsch W."/>
            <person name="Schagger H."/>
            <person name="Fuchs G."/>
        </authorList>
    </citation>
    <scope>PROTEIN SEQUENCE OF 1-12</scope>
    <scope>FUNCTION AS A PHENYLGLYOXYLATE DEHYDROGENASE</scope>
    <scope>CATALYTIC ACTIVITY</scope>
    <scope>BIOPHYSICOCHEMICAL PROPERTIES</scope>
    <scope>ACTIVITY REGULATION</scope>
    <scope>SUBSTRATE SPECIFICITY</scope>
    <scope>SUBUNIT</scope>
    <scope>INDUCTION</scope>
    <source>
        <strain>DSM 6898 / NBRC 107771 / KB740</strain>
    </source>
</reference>